<organism>
    <name type="scientific">Buchnera aphidicola subsp. Schizaphis graminum (strain Sg)</name>
    <dbReference type="NCBI Taxonomy" id="198804"/>
    <lineage>
        <taxon>Bacteria</taxon>
        <taxon>Pseudomonadati</taxon>
        <taxon>Pseudomonadota</taxon>
        <taxon>Gammaproteobacteria</taxon>
        <taxon>Enterobacterales</taxon>
        <taxon>Erwiniaceae</taxon>
        <taxon>Buchnera</taxon>
    </lineage>
</organism>
<comment type="function">
    <text evidence="1">Catalyzes the conversion of dethiobiotin (DTB) to biotin by the insertion of a sulfur atom into dethiobiotin via a radical-based mechanism.</text>
</comment>
<comment type="catalytic activity">
    <reaction evidence="1">
        <text>(4R,5S)-dethiobiotin + (sulfur carrier)-SH + 2 reduced [2Fe-2S]-[ferredoxin] + 2 S-adenosyl-L-methionine = (sulfur carrier)-H + biotin + 2 5'-deoxyadenosine + 2 L-methionine + 2 oxidized [2Fe-2S]-[ferredoxin]</text>
        <dbReference type="Rhea" id="RHEA:22060"/>
        <dbReference type="Rhea" id="RHEA-COMP:10000"/>
        <dbReference type="Rhea" id="RHEA-COMP:10001"/>
        <dbReference type="Rhea" id="RHEA-COMP:14737"/>
        <dbReference type="Rhea" id="RHEA-COMP:14739"/>
        <dbReference type="ChEBI" id="CHEBI:17319"/>
        <dbReference type="ChEBI" id="CHEBI:29917"/>
        <dbReference type="ChEBI" id="CHEBI:33737"/>
        <dbReference type="ChEBI" id="CHEBI:33738"/>
        <dbReference type="ChEBI" id="CHEBI:57586"/>
        <dbReference type="ChEBI" id="CHEBI:57844"/>
        <dbReference type="ChEBI" id="CHEBI:59789"/>
        <dbReference type="ChEBI" id="CHEBI:64428"/>
        <dbReference type="ChEBI" id="CHEBI:149473"/>
        <dbReference type="EC" id="2.8.1.6"/>
    </reaction>
</comment>
<comment type="cofactor">
    <cofactor evidence="1">
        <name>[4Fe-4S] cluster</name>
        <dbReference type="ChEBI" id="CHEBI:49883"/>
    </cofactor>
    <text evidence="1">Binds 1 [4Fe-4S] cluster. The cluster is coordinated with 3 cysteines and an exchangeable S-adenosyl-L-methionine.</text>
</comment>
<comment type="cofactor">
    <cofactor evidence="1">
        <name>[2Fe-2S] cluster</name>
        <dbReference type="ChEBI" id="CHEBI:190135"/>
    </cofactor>
    <text evidence="1">Binds 1 [2Fe-2S] cluster. The cluster is coordinated with 3 cysteines and 1 arginine.</text>
</comment>
<comment type="pathway">
    <text evidence="1">Cofactor biosynthesis; biotin biosynthesis; biotin from 7,8-diaminononanoate: step 2/2.</text>
</comment>
<comment type="subunit">
    <text evidence="1">Homodimer.</text>
</comment>
<comment type="similarity">
    <text evidence="1">Belongs to the radical SAM superfamily. Biotin synthase family.</text>
</comment>
<gene>
    <name evidence="1" type="primary">bioB</name>
    <name type="ordered locus">BUsg_280</name>
</gene>
<protein>
    <recommendedName>
        <fullName evidence="1">Biotin synthase</fullName>
        <ecNumber evidence="1">2.8.1.6</ecNumber>
    </recommendedName>
</protein>
<dbReference type="EC" id="2.8.1.6" evidence="1"/>
<dbReference type="EMBL" id="AE013218">
    <property type="protein sequence ID" value="AAM67837.1"/>
    <property type="molecule type" value="Genomic_DNA"/>
</dbReference>
<dbReference type="RefSeq" id="WP_011053804.1">
    <property type="nucleotide sequence ID" value="NC_004061.1"/>
</dbReference>
<dbReference type="SMR" id="Q8K9P1"/>
<dbReference type="STRING" id="198804.BUsg_280"/>
<dbReference type="GeneID" id="93003750"/>
<dbReference type="KEGG" id="bas:BUsg_280"/>
<dbReference type="eggNOG" id="COG0502">
    <property type="taxonomic scope" value="Bacteria"/>
</dbReference>
<dbReference type="HOGENOM" id="CLU_033172_1_2_6"/>
<dbReference type="UniPathway" id="UPA00078">
    <property type="reaction ID" value="UER00162"/>
</dbReference>
<dbReference type="Proteomes" id="UP000000416">
    <property type="component" value="Chromosome"/>
</dbReference>
<dbReference type="GO" id="GO:0051537">
    <property type="term" value="F:2 iron, 2 sulfur cluster binding"/>
    <property type="evidence" value="ECO:0007669"/>
    <property type="project" value="UniProtKB-KW"/>
</dbReference>
<dbReference type="GO" id="GO:0051539">
    <property type="term" value="F:4 iron, 4 sulfur cluster binding"/>
    <property type="evidence" value="ECO:0007669"/>
    <property type="project" value="UniProtKB-KW"/>
</dbReference>
<dbReference type="GO" id="GO:0004076">
    <property type="term" value="F:biotin synthase activity"/>
    <property type="evidence" value="ECO:0007669"/>
    <property type="project" value="UniProtKB-UniRule"/>
</dbReference>
<dbReference type="GO" id="GO:0005506">
    <property type="term" value="F:iron ion binding"/>
    <property type="evidence" value="ECO:0007669"/>
    <property type="project" value="UniProtKB-UniRule"/>
</dbReference>
<dbReference type="GO" id="GO:0009102">
    <property type="term" value="P:biotin biosynthetic process"/>
    <property type="evidence" value="ECO:0007669"/>
    <property type="project" value="UniProtKB-UniRule"/>
</dbReference>
<dbReference type="CDD" id="cd01335">
    <property type="entry name" value="Radical_SAM"/>
    <property type="match status" value="1"/>
</dbReference>
<dbReference type="FunFam" id="3.20.20.70:FF:000011">
    <property type="entry name" value="Biotin synthase"/>
    <property type="match status" value="1"/>
</dbReference>
<dbReference type="Gene3D" id="3.20.20.70">
    <property type="entry name" value="Aldolase class I"/>
    <property type="match status" value="1"/>
</dbReference>
<dbReference type="HAMAP" id="MF_01694">
    <property type="entry name" value="BioB"/>
    <property type="match status" value="1"/>
</dbReference>
<dbReference type="InterPro" id="IPR013785">
    <property type="entry name" value="Aldolase_TIM"/>
</dbReference>
<dbReference type="InterPro" id="IPR010722">
    <property type="entry name" value="BATS_dom"/>
</dbReference>
<dbReference type="InterPro" id="IPR002684">
    <property type="entry name" value="Biotin_synth/BioAB"/>
</dbReference>
<dbReference type="InterPro" id="IPR024177">
    <property type="entry name" value="Biotin_synthase"/>
</dbReference>
<dbReference type="InterPro" id="IPR006638">
    <property type="entry name" value="Elp3/MiaA/NifB-like_rSAM"/>
</dbReference>
<dbReference type="InterPro" id="IPR007197">
    <property type="entry name" value="rSAM"/>
</dbReference>
<dbReference type="NCBIfam" id="TIGR00433">
    <property type="entry name" value="bioB"/>
    <property type="match status" value="1"/>
</dbReference>
<dbReference type="PANTHER" id="PTHR22976">
    <property type="entry name" value="BIOTIN SYNTHASE"/>
    <property type="match status" value="1"/>
</dbReference>
<dbReference type="PANTHER" id="PTHR22976:SF2">
    <property type="entry name" value="BIOTIN SYNTHASE, MITOCHONDRIAL"/>
    <property type="match status" value="1"/>
</dbReference>
<dbReference type="Pfam" id="PF06968">
    <property type="entry name" value="BATS"/>
    <property type="match status" value="1"/>
</dbReference>
<dbReference type="Pfam" id="PF04055">
    <property type="entry name" value="Radical_SAM"/>
    <property type="match status" value="1"/>
</dbReference>
<dbReference type="PIRSF" id="PIRSF001619">
    <property type="entry name" value="Biotin_synth"/>
    <property type="match status" value="1"/>
</dbReference>
<dbReference type="SFLD" id="SFLDG01060">
    <property type="entry name" value="BATS_domain_containing"/>
    <property type="match status" value="1"/>
</dbReference>
<dbReference type="SFLD" id="SFLDF00272">
    <property type="entry name" value="biotin_synthase"/>
    <property type="match status" value="1"/>
</dbReference>
<dbReference type="SMART" id="SM00876">
    <property type="entry name" value="BATS"/>
    <property type="match status" value="1"/>
</dbReference>
<dbReference type="SMART" id="SM00729">
    <property type="entry name" value="Elp3"/>
    <property type="match status" value="1"/>
</dbReference>
<dbReference type="SUPFAM" id="SSF102114">
    <property type="entry name" value="Radical SAM enzymes"/>
    <property type="match status" value="1"/>
</dbReference>
<dbReference type="PROSITE" id="PS51918">
    <property type="entry name" value="RADICAL_SAM"/>
    <property type="match status" value="1"/>
</dbReference>
<evidence type="ECO:0000255" key="1">
    <source>
        <dbReference type="HAMAP-Rule" id="MF_01694"/>
    </source>
</evidence>
<evidence type="ECO:0000255" key="2">
    <source>
        <dbReference type="PROSITE-ProRule" id="PRU01266"/>
    </source>
</evidence>
<keyword id="KW-0001">2Fe-2S</keyword>
<keyword id="KW-0004">4Fe-4S</keyword>
<keyword id="KW-0093">Biotin biosynthesis</keyword>
<keyword id="KW-0408">Iron</keyword>
<keyword id="KW-0411">Iron-sulfur</keyword>
<keyword id="KW-0479">Metal-binding</keyword>
<keyword id="KW-0949">S-adenosyl-L-methionine</keyword>
<keyword id="KW-0808">Transferase</keyword>
<name>BIOB_BUCAP</name>
<accession>Q8K9P1</accession>
<feature type="chain" id="PRO_0000185548" description="Biotin synthase">
    <location>
        <begin position="1"/>
        <end position="342"/>
    </location>
</feature>
<feature type="domain" description="Radical SAM core" evidence="2">
    <location>
        <begin position="36"/>
        <end position="260"/>
    </location>
</feature>
<feature type="binding site" evidence="1">
    <location>
        <position position="51"/>
    </location>
    <ligand>
        <name>[4Fe-4S] cluster</name>
        <dbReference type="ChEBI" id="CHEBI:49883"/>
        <note>4Fe-4S-S-AdoMet</note>
    </ligand>
</feature>
<feature type="binding site" evidence="1">
    <location>
        <position position="55"/>
    </location>
    <ligand>
        <name>[4Fe-4S] cluster</name>
        <dbReference type="ChEBI" id="CHEBI:49883"/>
        <note>4Fe-4S-S-AdoMet</note>
    </ligand>
</feature>
<feature type="binding site" evidence="1">
    <location>
        <position position="58"/>
    </location>
    <ligand>
        <name>[4Fe-4S] cluster</name>
        <dbReference type="ChEBI" id="CHEBI:49883"/>
        <note>4Fe-4S-S-AdoMet</note>
    </ligand>
</feature>
<feature type="binding site" evidence="1">
    <location>
        <position position="95"/>
    </location>
    <ligand>
        <name>[2Fe-2S] cluster</name>
        <dbReference type="ChEBI" id="CHEBI:190135"/>
    </ligand>
</feature>
<feature type="binding site" evidence="1">
    <location>
        <position position="126"/>
    </location>
    <ligand>
        <name>[2Fe-2S] cluster</name>
        <dbReference type="ChEBI" id="CHEBI:190135"/>
    </ligand>
</feature>
<feature type="binding site" evidence="1">
    <location>
        <position position="186"/>
    </location>
    <ligand>
        <name>[2Fe-2S] cluster</name>
        <dbReference type="ChEBI" id="CHEBI:190135"/>
    </ligand>
</feature>
<feature type="binding site" evidence="1">
    <location>
        <position position="258"/>
    </location>
    <ligand>
        <name>[2Fe-2S] cluster</name>
        <dbReference type="ChEBI" id="CHEBI:190135"/>
    </ligand>
</feature>
<proteinExistence type="inferred from homology"/>
<reference key="1">
    <citation type="journal article" date="2002" name="Science">
        <title>50 million years of genomic stasis in endosymbiotic bacteria.</title>
        <authorList>
            <person name="Tamas I."/>
            <person name="Klasson L."/>
            <person name="Canbaeck B."/>
            <person name="Naeslund A.K."/>
            <person name="Eriksson A.-S."/>
            <person name="Wernegreen J.J."/>
            <person name="Sandstroem J.P."/>
            <person name="Moran N.A."/>
            <person name="Andersson S.G.E."/>
        </authorList>
    </citation>
    <scope>NUCLEOTIDE SEQUENCE [LARGE SCALE GENOMIC DNA]</scope>
    <source>
        <strain>Sg</strain>
    </source>
</reference>
<sequence>MKRKWNLEDTKKLFSKPFFDLIFEAQKKHREYFNPNRIQISTLLSIKTGACPEDCKYCPQSSRYKTGLKKEPLLEIEQILKAAKKAKSSGSTRFCMGAAWKNPKEKDMPYLEKIVKEVKKMGMETCMTLGTLNNSQAKKLAKAGLDFYNHNLDTSSNFYSSIITTRTYEERLSTLKKVRNSGMKICSGGIIGLGEKKQDRMELLMELSNLSIQPESVPINMLVKIPGTPMEKNENVDPFEFIRVIAATRIMMPKSYIRLSAGRENMSDETQAMCFMAGANSIFYGCKLLTSSNPKEEKDQKLFEKLDLFPDYKIQSITEENKNNENLKISDVNKAQYYNAAI</sequence>